<sequence length="687" mass="77421">MSVRYPLLNRELGILGFNERVLAQAADPQVPLLERLRFICITSSNLDEFFEVRMAGLQEQIRDNPGALTPDGMSLQHAYDLVVERAQRLVHRQYTMLHETVLPALEQEGIYFHAADTWNDEQLEWARRYFLDELLPVLTPIGLDPAHPFPRVLNKSLNFVVELEGRDAFGRQAVMGIVQAPRALPRVVRMPQALSGFEHGFVLLSTFMQRFVGELFPQLVVKSCNQFRITRNSELFVDEDEITNLRVALQGELPARHLGNAVRLEVSADTPAHIVRRLLEESLLDEKDCYRVAGSVNLVRLMQIPDLVDRPDLKFAPFTASIPPVIANAPAMFDAIDDGDILLHHPYESFQPVLELLQQAAKDPSVVAIKQTIYRTGTDSPLMDALMAAARNGKEVTVVVELLARFDEETNINWASQLEAVGAHVVYGVVGHKCHAKMMLIVRRVVESGKATLRRYVHLGTGNYHPRTARLYTDFGLMTADQKICEDVHHVFQQLTGIGGELTLHELWQSPFTLHPRIIESIRAEIDNARAGKRARVVAKMNALLEPTVIAALYEASQAGVKVDLIVRGVCALKPGVPGLSENITVRSIVGRFLEHHRIYYFHADGAEEVYLSSADWMDRNLFRRVEVAFPIRERKLKRRVIAEGLSVCLGDNQSAWLMQSDGHYRRRRAGKTLRNAQLGLLAKFCS</sequence>
<feature type="chain" id="PRO_1000120498" description="Polyphosphate kinase">
    <location>
        <begin position="1"/>
        <end position="687"/>
    </location>
</feature>
<feature type="active site" description="Phosphohistidine intermediate" evidence="1">
    <location>
        <position position="435"/>
    </location>
</feature>
<feature type="binding site" evidence="1">
    <location>
        <position position="45"/>
    </location>
    <ligand>
        <name>ATP</name>
        <dbReference type="ChEBI" id="CHEBI:30616"/>
    </ligand>
</feature>
<feature type="binding site" evidence="1">
    <location>
        <position position="375"/>
    </location>
    <ligand>
        <name>Mg(2+)</name>
        <dbReference type="ChEBI" id="CHEBI:18420"/>
    </ligand>
</feature>
<feature type="binding site" evidence="1">
    <location>
        <position position="405"/>
    </location>
    <ligand>
        <name>Mg(2+)</name>
        <dbReference type="ChEBI" id="CHEBI:18420"/>
    </ligand>
</feature>
<feature type="binding site" evidence="1">
    <location>
        <position position="472"/>
    </location>
    <ligand>
        <name>ATP</name>
        <dbReference type="ChEBI" id="CHEBI:30616"/>
    </ligand>
</feature>
<feature type="binding site" evidence="1">
    <location>
        <position position="568"/>
    </location>
    <ligand>
        <name>ATP</name>
        <dbReference type="ChEBI" id="CHEBI:30616"/>
    </ligand>
</feature>
<feature type="binding site" evidence="1">
    <location>
        <position position="596"/>
    </location>
    <ligand>
        <name>ATP</name>
        <dbReference type="ChEBI" id="CHEBI:30616"/>
    </ligand>
</feature>
<proteinExistence type="inferred from homology"/>
<accession>B1YMX3</accession>
<keyword id="KW-0067">ATP-binding</keyword>
<keyword id="KW-0418">Kinase</keyword>
<keyword id="KW-0460">Magnesium</keyword>
<keyword id="KW-0479">Metal-binding</keyword>
<keyword id="KW-0547">Nucleotide-binding</keyword>
<keyword id="KW-0597">Phosphoprotein</keyword>
<keyword id="KW-0808">Transferase</keyword>
<protein>
    <recommendedName>
        <fullName evidence="1">Polyphosphate kinase</fullName>
        <ecNumber evidence="1">2.7.4.1</ecNumber>
    </recommendedName>
    <alternativeName>
        <fullName evidence="1">ATP-polyphosphate phosphotransferase</fullName>
    </alternativeName>
    <alternativeName>
        <fullName evidence="1">Polyphosphoric acid kinase</fullName>
    </alternativeName>
</protein>
<reference key="1">
    <citation type="submission" date="2008-04" db="EMBL/GenBank/DDBJ databases">
        <title>Complete sequence of chromosome 1 of Burkholderia ambifaria MC40-6.</title>
        <authorList>
            <person name="Copeland A."/>
            <person name="Lucas S."/>
            <person name="Lapidus A."/>
            <person name="Glavina del Rio T."/>
            <person name="Dalin E."/>
            <person name="Tice H."/>
            <person name="Pitluck S."/>
            <person name="Chain P."/>
            <person name="Malfatti S."/>
            <person name="Shin M."/>
            <person name="Vergez L."/>
            <person name="Lang D."/>
            <person name="Schmutz J."/>
            <person name="Larimer F."/>
            <person name="Land M."/>
            <person name="Hauser L."/>
            <person name="Kyrpides N."/>
            <person name="Lykidis A."/>
            <person name="Ramette A."/>
            <person name="Konstantinidis K."/>
            <person name="Tiedje J."/>
            <person name="Richardson P."/>
        </authorList>
    </citation>
    <scope>NUCLEOTIDE SEQUENCE [LARGE SCALE GENOMIC DNA]</scope>
    <source>
        <strain>MC40-6</strain>
    </source>
</reference>
<dbReference type="EC" id="2.7.4.1" evidence="1"/>
<dbReference type="EMBL" id="CP001025">
    <property type="protein sequence ID" value="ACB63687.1"/>
    <property type="molecule type" value="Genomic_DNA"/>
</dbReference>
<dbReference type="RefSeq" id="WP_012363557.1">
    <property type="nucleotide sequence ID" value="NC_010551.1"/>
</dbReference>
<dbReference type="SMR" id="B1YMX3"/>
<dbReference type="KEGG" id="bac:BamMC406_1196"/>
<dbReference type="HOGENOM" id="CLU_009678_5_0_4"/>
<dbReference type="OrthoDB" id="9761456at2"/>
<dbReference type="Proteomes" id="UP000001680">
    <property type="component" value="Chromosome 1"/>
</dbReference>
<dbReference type="GO" id="GO:0009358">
    <property type="term" value="C:polyphosphate kinase complex"/>
    <property type="evidence" value="ECO:0007669"/>
    <property type="project" value="InterPro"/>
</dbReference>
<dbReference type="GO" id="GO:0005524">
    <property type="term" value="F:ATP binding"/>
    <property type="evidence" value="ECO:0007669"/>
    <property type="project" value="UniProtKB-KW"/>
</dbReference>
<dbReference type="GO" id="GO:0046872">
    <property type="term" value="F:metal ion binding"/>
    <property type="evidence" value="ECO:0007669"/>
    <property type="project" value="UniProtKB-KW"/>
</dbReference>
<dbReference type="GO" id="GO:0008976">
    <property type="term" value="F:polyphosphate kinase activity"/>
    <property type="evidence" value="ECO:0007669"/>
    <property type="project" value="UniProtKB-UniRule"/>
</dbReference>
<dbReference type="GO" id="GO:0006799">
    <property type="term" value="P:polyphosphate biosynthetic process"/>
    <property type="evidence" value="ECO:0007669"/>
    <property type="project" value="UniProtKB-UniRule"/>
</dbReference>
<dbReference type="CDD" id="cd09165">
    <property type="entry name" value="PLDc_PaPPK1_C1_like"/>
    <property type="match status" value="1"/>
</dbReference>
<dbReference type="CDD" id="cd09168">
    <property type="entry name" value="PLDc_PaPPK1_C2_like"/>
    <property type="match status" value="1"/>
</dbReference>
<dbReference type="Gene3D" id="3.30.870.10">
    <property type="entry name" value="Endonuclease Chain A"/>
    <property type="match status" value="2"/>
</dbReference>
<dbReference type="Gene3D" id="3.30.1840.10">
    <property type="entry name" value="Polyphosphate kinase middle domain"/>
    <property type="match status" value="1"/>
</dbReference>
<dbReference type="Gene3D" id="1.20.58.310">
    <property type="entry name" value="Polyphosphate kinase N-terminal domain"/>
    <property type="match status" value="1"/>
</dbReference>
<dbReference type="HAMAP" id="MF_00347">
    <property type="entry name" value="Polyphosphate_kinase"/>
    <property type="match status" value="1"/>
</dbReference>
<dbReference type="InterPro" id="IPR003414">
    <property type="entry name" value="PP_kinase"/>
</dbReference>
<dbReference type="InterPro" id="IPR041108">
    <property type="entry name" value="PP_kinase_C_1"/>
</dbReference>
<dbReference type="InterPro" id="IPR024953">
    <property type="entry name" value="PP_kinase_middle"/>
</dbReference>
<dbReference type="InterPro" id="IPR036830">
    <property type="entry name" value="PP_kinase_middle_dom_sf"/>
</dbReference>
<dbReference type="InterPro" id="IPR025200">
    <property type="entry name" value="PPK_C_dom2"/>
</dbReference>
<dbReference type="InterPro" id="IPR025198">
    <property type="entry name" value="PPK_N_dom"/>
</dbReference>
<dbReference type="InterPro" id="IPR036832">
    <property type="entry name" value="PPK_N_dom_sf"/>
</dbReference>
<dbReference type="NCBIfam" id="TIGR03705">
    <property type="entry name" value="poly_P_kin"/>
    <property type="match status" value="1"/>
</dbReference>
<dbReference type="NCBIfam" id="NF003917">
    <property type="entry name" value="PRK05443.1-1"/>
    <property type="match status" value="1"/>
</dbReference>
<dbReference type="NCBIfam" id="NF003918">
    <property type="entry name" value="PRK05443.1-2"/>
    <property type="match status" value="1"/>
</dbReference>
<dbReference type="NCBIfam" id="NF003921">
    <property type="entry name" value="PRK05443.2-2"/>
    <property type="match status" value="1"/>
</dbReference>
<dbReference type="PANTHER" id="PTHR30218">
    <property type="entry name" value="POLYPHOSPHATE KINASE"/>
    <property type="match status" value="1"/>
</dbReference>
<dbReference type="PANTHER" id="PTHR30218:SF0">
    <property type="entry name" value="POLYPHOSPHATE KINASE"/>
    <property type="match status" value="1"/>
</dbReference>
<dbReference type="Pfam" id="PF02503">
    <property type="entry name" value="PP_kinase"/>
    <property type="match status" value="1"/>
</dbReference>
<dbReference type="Pfam" id="PF13090">
    <property type="entry name" value="PP_kinase_C"/>
    <property type="match status" value="1"/>
</dbReference>
<dbReference type="Pfam" id="PF17941">
    <property type="entry name" value="PP_kinase_C_1"/>
    <property type="match status" value="1"/>
</dbReference>
<dbReference type="Pfam" id="PF13089">
    <property type="entry name" value="PP_kinase_N"/>
    <property type="match status" value="1"/>
</dbReference>
<dbReference type="PIRSF" id="PIRSF015589">
    <property type="entry name" value="PP_kinase"/>
    <property type="match status" value="1"/>
</dbReference>
<dbReference type="SUPFAM" id="SSF56024">
    <property type="entry name" value="Phospholipase D/nuclease"/>
    <property type="match status" value="2"/>
</dbReference>
<dbReference type="SUPFAM" id="SSF143724">
    <property type="entry name" value="PHP14-like"/>
    <property type="match status" value="1"/>
</dbReference>
<dbReference type="SUPFAM" id="SSF140356">
    <property type="entry name" value="PPK N-terminal domain-like"/>
    <property type="match status" value="1"/>
</dbReference>
<name>PPK1_BURA4</name>
<gene>
    <name evidence="1" type="primary">ppk</name>
    <name type="ordered locus">BamMC406_1196</name>
</gene>
<comment type="function">
    <text evidence="1">Catalyzes the reversible transfer of the terminal phosphate of ATP to form a long-chain polyphosphate (polyP).</text>
</comment>
<comment type="catalytic activity">
    <reaction evidence="1">
        <text>[phosphate](n) + ATP = [phosphate](n+1) + ADP</text>
        <dbReference type="Rhea" id="RHEA:19573"/>
        <dbReference type="Rhea" id="RHEA-COMP:9859"/>
        <dbReference type="Rhea" id="RHEA-COMP:14280"/>
        <dbReference type="ChEBI" id="CHEBI:16838"/>
        <dbReference type="ChEBI" id="CHEBI:30616"/>
        <dbReference type="ChEBI" id="CHEBI:456216"/>
        <dbReference type="EC" id="2.7.4.1"/>
    </reaction>
</comment>
<comment type="cofactor">
    <cofactor evidence="1">
        <name>Mg(2+)</name>
        <dbReference type="ChEBI" id="CHEBI:18420"/>
    </cofactor>
</comment>
<comment type="PTM">
    <text evidence="1">An intermediate of this reaction is the autophosphorylated ppk in which a phosphate is covalently linked to a histidine residue through a N-P bond.</text>
</comment>
<comment type="similarity">
    <text evidence="1">Belongs to the polyphosphate kinase 1 (PPK1) family.</text>
</comment>
<organism>
    <name type="scientific">Burkholderia ambifaria (strain MC40-6)</name>
    <dbReference type="NCBI Taxonomy" id="398577"/>
    <lineage>
        <taxon>Bacteria</taxon>
        <taxon>Pseudomonadati</taxon>
        <taxon>Pseudomonadota</taxon>
        <taxon>Betaproteobacteria</taxon>
        <taxon>Burkholderiales</taxon>
        <taxon>Burkholderiaceae</taxon>
        <taxon>Burkholderia</taxon>
        <taxon>Burkholderia cepacia complex</taxon>
    </lineage>
</organism>
<evidence type="ECO:0000255" key="1">
    <source>
        <dbReference type="HAMAP-Rule" id="MF_00347"/>
    </source>
</evidence>